<reference key="1">
    <citation type="journal article" date="1993" name="Plant Mol. Biol.">
        <title>Genes of the R-phycocyanin II locus of marine Synechococcus spp., and comparison of protein-chromophore interactions in phycocyanins differing in bilin composition.</title>
        <authorList>
            <person name="de Lorimier R."/>
            <person name="Wilbanks S.M."/>
            <person name="Glazer A.N."/>
        </authorList>
    </citation>
    <scope>NUCLEOTIDE SEQUENCE [GENOMIC DNA]</scope>
</reference>
<reference key="2">
    <citation type="journal article" date="1993" name="J. Biol. Chem.">
        <title>Rod structure of a phycoerythrin II-containing phycobilisome. I. Organization and sequence of the gene cluster encoding the major phycobiliprotein rod components in the genome of marine Synechococcus sp. WH8020.</title>
        <authorList>
            <person name="Wilbanks S.M."/>
            <person name="Glazer A.N."/>
        </authorList>
    </citation>
    <scope>NUCLEOTIDE SEQUENCE [GENOMIC DNA]</scope>
</reference>
<reference key="3">
    <citation type="journal article" date="1991" name="J. Biol. Chem.">
        <title>Phycoerythrins of marine unicellular cyanobacteria. I. Bilin types and locations and energy transfer pathways in Synechococcus spp. phycoerythrins.</title>
        <authorList>
            <person name="Ong L.J."/>
            <person name="Glazer A.N."/>
        </authorList>
    </citation>
    <scope>PARTIAL PROTEIN SEQUENCE</scope>
    <scope>CHROMOPHORE BINDING</scope>
</reference>
<organism>
    <name type="scientific">Synechococcus sp. (strain WH8020)</name>
    <dbReference type="NCBI Taxonomy" id="32052"/>
    <lineage>
        <taxon>Bacteria</taxon>
        <taxon>Bacillati</taxon>
        <taxon>Cyanobacteriota</taxon>
        <taxon>Cyanophyceae</taxon>
        <taxon>Synechococcales</taxon>
        <taxon>Synechococcaceae</taxon>
        <taxon>Synechococcus</taxon>
    </lineage>
</organism>
<dbReference type="EMBL" id="M95288">
    <property type="protein sequence ID" value="AAA27340.1"/>
    <property type="molecule type" value="Genomic_DNA"/>
</dbReference>
<dbReference type="PIR" id="G45045">
    <property type="entry name" value="G45045"/>
</dbReference>
<dbReference type="RefSeq" id="WP_048347958.1">
    <property type="nucleotide sequence ID" value="NZ_CP011941.1"/>
</dbReference>
<dbReference type="SMR" id="Q02179"/>
<dbReference type="STRING" id="32052.WB44_13660"/>
<dbReference type="OrthoDB" id="466183at2"/>
<dbReference type="GO" id="GO:0030089">
    <property type="term" value="C:phycobilisome"/>
    <property type="evidence" value="ECO:0007669"/>
    <property type="project" value="UniProtKB-KW"/>
</dbReference>
<dbReference type="GO" id="GO:0031676">
    <property type="term" value="C:plasma membrane-derived thylakoid membrane"/>
    <property type="evidence" value="ECO:0007669"/>
    <property type="project" value="UniProtKB-SubCell"/>
</dbReference>
<dbReference type="GO" id="GO:0015979">
    <property type="term" value="P:photosynthesis"/>
    <property type="evidence" value="ECO:0007669"/>
    <property type="project" value="UniProtKB-KW"/>
</dbReference>
<dbReference type="CDD" id="cd14769">
    <property type="entry name" value="PE_alpha"/>
    <property type="match status" value="1"/>
</dbReference>
<dbReference type="Gene3D" id="1.10.490.20">
    <property type="entry name" value="Phycocyanins"/>
    <property type="match status" value="1"/>
</dbReference>
<dbReference type="InterPro" id="IPR009050">
    <property type="entry name" value="Globin-like_sf"/>
</dbReference>
<dbReference type="InterPro" id="IPR012128">
    <property type="entry name" value="Phycobilisome_asu/bsu"/>
</dbReference>
<dbReference type="InterPro" id="IPR038719">
    <property type="entry name" value="Phycobilisome_asu/bsu_sf"/>
</dbReference>
<dbReference type="PANTHER" id="PTHR34011:SF4">
    <property type="entry name" value="C-PHYCOCYANIN ALPHA SUBUNIT"/>
    <property type="match status" value="1"/>
</dbReference>
<dbReference type="PANTHER" id="PTHR34011">
    <property type="entry name" value="PHYCOBILISOME 32.1 KDA LINKER POLYPEPTIDE, PHYCOCYANIN-ASSOCIATED, ROD 2-RELATED"/>
    <property type="match status" value="1"/>
</dbReference>
<dbReference type="Pfam" id="PF00502">
    <property type="entry name" value="Phycobilisome"/>
    <property type="match status" value="1"/>
</dbReference>
<dbReference type="PIRSF" id="PIRSF000081">
    <property type="entry name" value="Phycocyanin"/>
    <property type="match status" value="1"/>
</dbReference>
<dbReference type="SUPFAM" id="SSF46458">
    <property type="entry name" value="Globin-like"/>
    <property type="match status" value="1"/>
</dbReference>
<proteinExistence type="evidence at protein level"/>
<comment type="function">
    <text>Light-harvesting photosynthetic bile pigment-protein from the phycobiliprotein complex.</text>
</comment>
<comment type="subunit">
    <text>Heterodimer of an alpha and a beta chain.</text>
</comment>
<comment type="subcellular location">
    <subcellularLocation>
        <location>Cellular thylakoid membrane</location>
        <topology>Peripheral membrane protein</topology>
        <orientation>Cytoplasmic side</orientation>
    </subcellularLocation>
    <text>Forms the periphery of the phycobilisome rod.</text>
</comment>
<comment type="PTM">
    <text>Contains two covalently linked phycoerythrobilin chromophores.</text>
</comment>
<comment type="similarity">
    <text evidence="1">Belongs to the phycobiliprotein family.</text>
</comment>
<accession>Q02179</accession>
<keyword id="KW-0042">Antenna complex</keyword>
<keyword id="KW-0089">Bile pigment</keyword>
<keyword id="KW-0157">Chromophore</keyword>
<keyword id="KW-0903">Direct protein sequencing</keyword>
<keyword id="KW-0249">Electron transport</keyword>
<keyword id="KW-0472">Membrane</keyword>
<keyword id="KW-0602">Photosynthesis</keyword>
<keyword id="KW-0605">Phycobilisome</keyword>
<keyword id="KW-0793">Thylakoid</keyword>
<keyword id="KW-0813">Transport</keyword>
<protein>
    <recommendedName>
        <fullName>C-phycoerythrin class 1 subunit alpha</fullName>
    </recommendedName>
    <alternativeName>
        <fullName>C-phycoerythrin class I alpha chain</fullName>
    </alternativeName>
</protein>
<gene>
    <name type="primary">cpeA</name>
</gene>
<evidence type="ECO:0000305" key="1"/>
<name>PHEA1_SYNPY</name>
<sequence length="164" mass="17860">MKSVVTTVVTAADAAGRFLSQNDLEAVQGNIQRAAARLEAAEKLAAGLDKVTREAGDACFNKYSYLKQPGEAGDSQVKVDKCYRDLGHYLRLINYCLVVGGTGPLDEWGIAGAREVYRSLSLPTGPYVEALTYTRDRACAPRDMSPQALNEFKSYLDYVINALS</sequence>
<feature type="chain" id="PRO_0000199183" description="C-phycoerythrin class 1 subunit alpha">
    <location>
        <begin position="1"/>
        <end position="164"/>
    </location>
</feature>
<feature type="binding site" description="covalent">
    <location>
        <position position="82"/>
    </location>
    <ligand>
        <name>(2R,3E)-phycoerythrobilin</name>
        <dbReference type="ChEBI" id="CHEBI:85276"/>
        <label>1</label>
    </ligand>
</feature>
<feature type="binding site" description="covalent">
    <location>
        <position position="139"/>
    </location>
    <ligand>
        <name>(2R,3E)-phycoerythrobilin</name>
        <dbReference type="ChEBI" id="CHEBI:85276"/>
        <label>2</label>
    </ligand>
</feature>